<reference key="1">
    <citation type="submission" date="2008-05" db="EMBL/GenBank/DDBJ databases">
        <title>Genome sequence of Helicobacter pylori from the remote Amazon: traces of Asian ancestry of the first Americans.</title>
        <authorList>
            <person name="Kersulyte D."/>
            <person name="Kalia A."/>
            <person name="Gilman R.H."/>
            <person name="Berg D.E."/>
        </authorList>
    </citation>
    <scope>NUCLEOTIDE SEQUENCE [LARGE SCALE GENOMIC DNA]</scope>
    <source>
        <strain>Shi470</strain>
    </source>
</reference>
<evidence type="ECO:0000255" key="1">
    <source>
        <dbReference type="HAMAP-Rule" id="MF_01358"/>
    </source>
</evidence>
<keyword id="KW-0997">Cell inner membrane</keyword>
<keyword id="KW-1003">Cell membrane</keyword>
<keyword id="KW-0472">Membrane</keyword>
<keyword id="KW-0520">NAD</keyword>
<keyword id="KW-0874">Quinone</keyword>
<keyword id="KW-1278">Translocase</keyword>
<keyword id="KW-0813">Transport</keyword>
<keyword id="KW-0830">Ubiquinone</keyword>
<dbReference type="EC" id="7.1.1.-" evidence="1"/>
<dbReference type="EMBL" id="CP001072">
    <property type="protein sequence ID" value="ACD48709.1"/>
    <property type="molecule type" value="Genomic_DNA"/>
</dbReference>
<dbReference type="RefSeq" id="WP_000068200.1">
    <property type="nucleotide sequence ID" value="NC_010698.2"/>
</dbReference>
<dbReference type="SMR" id="B2UV27"/>
<dbReference type="KEGG" id="hps:HPSH_06545"/>
<dbReference type="HOGENOM" id="CLU_015134_1_2_7"/>
<dbReference type="GO" id="GO:0005886">
    <property type="term" value="C:plasma membrane"/>
    <property type="evidence" value="ECO:0007669"/>
    <property type="project" value="UniProtKB-SubCell"/>
</dbReference>
<dbReference type="GO" id="GO:0051287">
    <property type="term" value="F:NAD binding"/>
    <property type="evidence" value="ECO:0007669"/>
    <property type="project" value="InterPro"/>
</dbReference>
<dbReference type="GO" id="GO:0050136">
    <property type="term" value="F:NADH:ubiquinone reductase (non-electrogenic) activity"/>
    <property type="evidence" value="ECO:0007669"/>
    <property type="project" value="UniProtKB-UniRule"/>
</dbReference>
<dbReference type="GO" id="GO:0048038">
    <property type="term" value="F:quinone binding"/>
    <property type="evidence" value="ECO:0007669"/>
    <property type="project" value="UniProtKB-KW"/>
</dbReference>
<dbReference type="Gene3D" id="1.10.645.10">
    <property type="entry name" value="Cytochrome-c3 Hydrogenase, chain B"/>
    <property type="match status" value="1"/>
</dbReference>
<dbReference type="HAMAP" id="MF_01358">
    <property type="entry name" value="NDH1_NuoD"/>
    <property type="match status" value="1"/>
</dbReference>
<dbReference type="InterPro" id="IPR001135">
    <property type="entry name" value="NADH_Q_OxRdtase_suD"/>
</dbReference>
<dbReference type="InterPro" id="IPR022885">
    <property type="entry name" value="NDH1_su_D/H"/>
</dbReference>
<dbReference type="InterPro" id="IPR029014">
    <property type="entry name" value="NiFe-Hase_large"/>
</dbReference>
<dbReference type="NCBIfam" id="TIGR01962">
    <property type="entry name" value="NuoD"/>
    <property type="match status" value="1"/>
</dbReference>
<dbReference type="NCBIfam" id="NF004739">
    <property type="entry name" value="PRK06075.1"/>
    <property type="match status" value="1"/>
</dbReference>
<dbReference type="PANTHER" id="PTHR11993:SF10">
    <property type="entry name" value="NADH DEHYDROGENASE [UBIQUINONE] IRON-SULFUR PROTEIN 2, MITOCHONDRIAL"/>
    <property type="match status" value="1"/>
</dbReference>
<dbReference type="PANTHER" id="PTHR11993">
    <property type="entry name" value="NADH-UBIQUINONE OXIDOREDUCTASE 49 KDA SUBUNIT"/>
    <property type="match status" value="1"/>
</dbReference>
<dbReference type="Pfam" id="PF00346">
    <property type="entry name" value="Complex1_49kDa"/>
    <property type="match status" value="1"/>
</dbReference>
<dbReference type="SUPFAM" id="SSF56762">
    <property type="entry name" value="HydB/Nqo4-like"/>
    <property type="match status" value="1"/>
</dbReference>
<feature type="chain" id="PRO_0000371881" description="NADH-quinone oxidoreductase subunit D">
    <location>
        <begin position="1"/>
        <end position="409"/>
    </location>
</feature>
<organism>
    <name type="scientific">Helicobacter pylori (strain Shi470)</name>
    <dbReference type="NCBI Taxonomy" id="512562"/>
    <lineage>
        <taxon>Bacteria</taxon>
        <taxon>Pseudomonadati</taxon>
        <taxon>Campylobacterota</taxon>
        <taxon>Epsilonproteobacteria</taxon>
        <taxon>Campylobacterales</taxon>
        <taxon>Helicobacteraceae</taxon>
        <taxon>Helicobacter</taxon>
    </lineage>
</organism>
<gene>
    <name evidence="1" type="primary">nuoD</name>
    <name type="ordered locus">HPSH_06545</name>
</gene>
<proteinExistence type="inferred from homology"/>
<accession>B2UV27</accession>
<sequence>MAQNFTKLNPQFENIIFEHDDNQMILNFGPQHPSSHGQLRLILELEGEKIIKATPEIGYLHRGCEKLGENMTYNEYMPTTDRLDYTSSTSNNYAYAHAVETLLNLEIPRRAQVIRTILLELNRMISHIFFISVHALDVGAMSVFLYAFKTREYGLDLMEDYCGARLTHNAIRIGGVPLDLPPNWLEGLKKFLGEMRECKKLIQGLLDKNRIWRMRLENVGVVTPKMAQSWGMSGIMLRGSGIAYDIRKEEPYELYKELDFDVPVGNYGDSYDRYCLYMLEIDESIRIIEQLIPMYAKTDTPIMAQNPHYISAPKEDIMTQNYALMQHFVLVAQGMRPPVGEVYAPTESPKGELGFFIHSEGEPYPHRLKIRAPSFYHIGALSDILVGQYLADAVTVIGSTNAVFGEVDR</sequence>
<name>NUOD_HELPS</name>
<protein>
    <recommendedName>
        <fullName evidence="1">NADH-quinone oxidoreductase subunit D</fullName>
        <ecNumber evidence="1">7.1.1.-</ecNumber>
    </recommendedName>
    <alternativeName>
        <fullName evidence="1">NADH dehydrogenase I subunit D</fullName>
    </alternativeName>
    <alternativeName>
        <fullName evidence="1">NDH-1 subunit D</fullName>
    </alternativeName>
</protein>
<comment type="function">
    <text evidence="1">NDH-1 shuttles electrons from NADH, via FMN and iron-sulfur (Fe-S) centers, to quinones in the respiratory chain. The immediate electron acceptor for the enzyme in this species is believed to be ubiquinone. Couples the redox reaction to proton translocation (for every two electrons transferred, four hydrogen ions are translocated across the cytoplasmic membrane), and thus conserves the redox energy in a proton gradient.</text>
</comment>
<comment type="catalytic activity">
    <reaction evidence="1">
        <text>a quinone + NADH + 5 H(+)(in) = a quinol + NAD(+) + 4 H(+)(out)</text>
        <dbReference type="Rhea" id="RHEA:57888"/>
        <dbReference type="ChEBI" id="CHEBI:15378"/>
        <dbReference type="ChEBI" id="CHEBI:24646"/>
        <dbReference type="ChEBI" id="CHEBI:57540"/>
        <dbReference type="ChEBI" id="CHEBI:57945"/>
        <dbReference type="ChEBI" id="CHEBI:132124"/>
    </reaction>
</comment>
<comment type="subunit">
    <text evidence="1">NDH-1 is composed of 14 different subunits. Subunits NuoB, C, D, E, F, and G constitute the peripheral sector of the complex.</text>
</comment>
<comment type="subcellular location">
    <subcellularLocation>
        <location evidence="1">Cell inner membrane</location>
        <topology evidence="1">Peripheral membrane protein</topology>
        <orientation evidence="1">Cytoplasmic side</orientation>
    </subcellularLocation>
</comment>
<comment type="similarity">
    <text evidence="1">Belongs to the complex I 49 kDa subunit family.</text>
</comment>